<sequence length="349" mass="38741">MAIPITVLDCDLLLYGRGHRTLDRFKLDDVTDEYLMSMYGFPRQFIYYLVELLGASLSRPTQRSRAISPETQILAALGFYTSGSFQTRMGDAIGISQASMSRCVANVTEALVERASQFIHFPADEAAIQSLKDEFYGLAGMPGVIGAVDCIHVAIKAPNAEDLSYVNRKGLHSLNCLVVCDIRGALMTVETSWPGSLQDCAVLQQSSLSSQFETGMPKDSWLLGDSSFFLHTWLLTPLHIPETPAEYRYNRAHSATHSVIEKTLRTLCCRFRCLDGSKGALQYSPEKSSHIILACCVLHNISLEHGMDVWSSPVTGPIEQPPEGEDEQMESLDLEADRIRQELILTHFS</sequence>
<keyword id="KW-0963">Cytoplasm</keyword>
<keyword id="KW-0378">Hydrolase</keyword>
<keyword id="KW-0479">Metal-binding</keyword>
<keyword id="KW-0540">Nuclease</keyword>
<keyword id="KW-0539">Nucleus</keyword>
<keyword id="KW-1185">Reference proteome</keyword>
<accession>B0BN95</accession>
<comment type="function">
    <text evidence="1 3">Transposase-derived protein that may have nuclease activity (Potential). Does not have transposase activity (By similarity).</text>
</comment>
<comment type="cofactor">
    <cofactor evidence="3">
        <name>a divalent metal cation</name>
        <dbReference type="ChEBI" id="CHEBI:60240"/>
    </cofactor>
</comment>
<comment type="subunit">
    <text evidence="1">Interacts with NAIF1.</text>
</comment>
<comment type="subcellular location">
    <subcellularLocation>
        <location evidence="1">Nucleus</location>
    </subcellularLocation>
    <subcellularLocation>
        <location evidence="1">Cytoplasm</location>
    </subcellularLocation>
    <text evidence="1">Interaction with NAIF1 promotes translocation to the nucleus.</text>
</comment>
<comment type="similarity">
    <text evidence="3">Belongs to the HARBI1 family.</text>
</comment>
<feature type="chain" id="PRO_0000345621" description="Putative nuclease HARBI1">
    <location>
        <begin position="1"/>
        <end position="349"/>
    </location>
</feature>
<feature type="domain" description="DDE Tnp4" evidence="2">
    <location>
        <begin position="148"/>
        <end position="300"/>
    </location>
</feature>
<feature type="binding site" evidence="2">
    <location>
        <position position="149"/>
    </location>
    <ligand>
        <name>a divalent metal cation</name>
        <dbReference type="ChEBI" id="CHEBI:60240"/>
    </ligand>
</feature>
<feature type="binding site" evidence="2">
    <location>
        <position position="199"/>
    </location>
    <ligand>
        <name>a divalent metal cation</name>
        <dbReference type="ChEBI" id="CHEBI:60240"/>
    </ligand>
</feature>
<feature type="binding site" evidence="2">
    <location>
        <position position="225"/>
    </location>
    <ligand>
        <name>a divalent metal cation</name>
        <dbReference type="ChEBI" id="CHEBI:60240"/>
    </ligand>
</feature>
<feature type="binding site" evidence="2">
    <location>
        <position position="261"/>
    </location>
    <ligand>
        <name>a divalent metal cation</name>
        <dbReference type="ChEBI" id="CHEBI:60240"/>
    </ligand>
</feature>
<name>HARB1_RAT</name>
<evidence type="ECO:0000250" key="1"/>
<evidence type="ECO:0000255" key="2"/>
<evidence type="ECO:0000305" key="3"/>
<reference key="1">
    <citation type="journal article" date="2004" name="Genome Res.">
        <title>The status, quality, and expansion of the NIH full-length cDNA project: the Mammalian Gene Collection (MGC).</title>
        <authorList>
            <consortium name="The MGC Project Team"/>
        </authorList>
    </citation>
    <scope>NUCLEOTIDE SEQUENCE [LARGE SCALE MRNA]</scope>
    <source>
        <tissue>Spleen</tissue>
    </source>
</reference>
<protein>
    <recommendedName>
        <fullName>Putative nuclease HARBI1</fullName>
        <ecNumber>3.1.-.-</ecNumber>
    </recommendedName>
    <alternativeName>
        <fullName>Harbinger transposase-derived nuclease</fullName>
    </alternativeName>
</protein>
<dbReference type="EC" id="3.1.-.-"/>
<dbReference type="EMBL" id="BC158734">
    <property type="protein sequence ID" value="AAI58735.1"/>
    <property type="molecule type" value="mRNA"/>
</dbReference>
<dbReference type="RefSeq" id="NP_001107265.2">
    <property type="nucleotide sequence ID" value="NM_001113793.3"/>
</dbReference>
<dbReference type="FunCoup" id="B0BN95">
    <property type="interactions" value="99"/>
</dbReference>
<dbReference type="STRING" id="10116.ENSRNOP00000061152"/>
<dbReference type="PhosphoSitePlus" id="B0BN95"/>
<dbReference type="PaxDb" id="10116-ENSRNOP00000061152"/>
<dbReference type="GeneID" id="690164"/>
<dbReference type="KEGG" id="rno:690164"/>
<dbReference type="UCSC" id="RGD:1584007">
    <property type="organism name" value="rat"/>
</dbReference>
<dbReference type="AGR" id="RGD:1584007"/>
<dbReference type="CTD" id="283254"/>
<dbReference type="RGD" id="1584007">
    <property type="gene designation" value="Harbi1"/>
</dbReference>
<dbReference type="eggNOG" id="KOG4585">
    <property type="taxonomic scope" value="Eukaryota"/>
</dbReference>
<dbReference type="HOGENOM" id="CLU_018552_13_0_1"/>
<dbReference type="InParanoid" id="B0BN95"/>
<dbReference type="OrthoDB" id="5737at9989"/>
<dbReference type="PhylomeDB" id="B0BN95"/>
<dbReference type="TreeFam" id="TF327972"/>
<dbReference type="PRO" id="PR:B0BN95"/>
<dbReference type="Proteomes" id="UP000002494">
    <property type="component" value="Unplaced"/>
</dbReference>
<dbReference type="GO" id="GO:0005737">
    <property type="term" value="C:cytoplasm"/>
    <property type="evidence" value="ECO:0007669"/>
    <property type="project" value="UniProtKB-SubCell"/>
</dbReference>
<dbReference type="GO" id="GO:0005634">
    <property type="term" value="C:nucleus"/>
    <property type="evidence" value="ECO:0007669"/>
    <property type="project" value="UniProtKB-SubCell"/>
</dbReference>
<dbReference type="GO" id="GO:0046872">
    <property type="term" value="F:metal ion binding"/>
    <property type="evidence" value="ECO:0007669"/>
    <property type="project" value="UniProtKB-KW"/>
</dbReference>
<dbReference type="GO" id="GO:0004518">
    <property type="term" value="F:nuclease activity"/>
    <property type="evidence" value="ECO:0007669"/>
    <property type="project" value="UniProtKB-KW"/>
</dbReference>
<dbReference type="InterPro" id="IPR045249">
    <property type="entry name" value="HARBI1-like"/>
</dbReference>
<dbReference type="InterPro" id="IPR026103">
    <property type="entry name" value="HARBI1_animal"/>
</dbReference>
<dbReference type="InterPro" id="IPR027806">
    <property type="entry name" value="HARBI1_dom"/>
</dbReference>
<dbReference type="PANTHER" id="PTHR22930">
    <property type="match status" value="1"/>
</dbReference>
<dbReference type="PANTHER" id="PTHR22930:SF253">
    <property type="entry name" value="NUCLEASE HARBI1-RELATED"/>
    <property type="match status" value="1"/>
</dbReference>
<dbReference type="Pfam" id="PF13359">
    <property type="entry name" value="DDE_Tnp_4"/>
    <property type="match status" value="1"/>
</dbReference>
<dbReference type="PRINTS" id="PR02086">
    <property type="entry name" value="PUTNUCHARBI1"/>
</dbReference>
<proteinExistence type="evidence at transcript level"/>
<gene>
    <name type="primary">Harbi1</name>
</gene>
<organism>
    <name type="scientific">Rattus norvegicus</name>
    <name type="common">Rat</name>
    <dbReference type="NCBI Taxonomy" id="10116"/>
    <lineage>
        <taxon>Eukaryota</taxon>
        <taxon>Metazoa</taxon>
        <taxon>Chordata</taxon>
        <taxon>Craniata</taxon>
        <taxon>Vertebrata</taxon>
        <taxon>Euteleostomi</taxon>
        <taxon>Mammalia</taxon>
        <taxon>Eutheria</taxon>
        <taxon>Euarchontoglires</taxon>
        <taxon>Glires</taxon>
        <taxon>Rodentia</taxon>
        <taxon>Myomorpha</taxon>
        <taxon>Muroidea</taxon>
        <taxon>Muridae</taxon>
        <taxon>Murinae</taxon>
        <taxon>Rattus</taxon>
    </lineage>
</organism>